<keyword id="KW-0002">3D-structure</keyword>
<keyword id="KW-0687">Ribonucleoprotein</keyword>
<keyword id="KW-0689">Ribosomal protein</keyword>
<comment type="similarity">
    <text evidence="1">Belongs to the universal ribosomal protein uL13 family.</text>
</comment>
<protein>
    <recommendedName>
        <fullName evidence="1">Large ribosomal subunit protein uL13</fullName>
    </recommendedName>
    <alternativeName>
        <fullName>60S ribosomal protein L13a</fullName>
    </alternativeName>
</protein>
<dbReference type="EMBL" id="AAGF03000546">
    <property type="status" value="NOT_ANNOTATED_CDS"/>
    <property type="molecule type" value="Genomic_DNA"/>
</dbReference>
<dbReference type="EMBL" id="DY680158">
    <property type="status" value="NOT_ANNOTATED_CDS"/>
    <property type="molecule type" value="mRNA"/>
</dbReference>
<dbReference type="PDB" id="4V8P">
    <property type="method" value="X-ray"/>
    <property type="resolution" value="3.52 A"/>
    <property type="chains" value="BI/CI/EI/GI=1-198"/>
</dbReference>
<dbReference type="PDBsum" id="4V8P"/>
<dbReference type="SMR" id="P0DJ15"/>
<dbReference type="FunCoup" id="P0DJ15">
    <property type="interactions" value="445"/>
</dbReference>
<dbReference type="IntAct" id="P0DJ15">
    <property type="interactions" value="1"/>
</dbReference>
<dbReference type="STRING" id="312017.P0DJ15"/>
<dbReference type="eggNOG" id="KOG3204">
    <property type="taxonomic scope" value="Eukaryota"/>
</dbReference>
<dbReference type="InParanoid" id="P0DJ15"/>
<dbReference type="GO" id="GO:0022625">
    <property type="term" value="C:cytosolic large ribosomal subunit"/>
    <property type="evidence" value="ECO:0007669"/>
    <property type="project" value="TreeGrafter"/>
</dbReference>
<dbReference type="GO" id="GO:0003729">
    <property type="term" value="F:mRNA binding"/>
    <property type="evidence" value="ECO:0007669"/>
    <property type="project" value="TreeGrafter"/>
</dbReference>
<dbReference type="GO" id="GO:0003735">
    <property type="term" value="F:structural constituent of ribosome"/>
    <property type="evidence" value="ECO:0007669"/>
    <property type="project" value="InterPro"/>
</dbReference>
<dbReference type="GO" id="GO:0017148">
    <property type="term" value="P:negative regulation of translation"/>
    <property type="evidence" value="ECO:0007669"/>
    <property type="project" value="TreeGrafter"/>
</dbReference>
<dbReference type="GO" id="GO:0006412">
    <property type="term" value="P:translation"/>
    <property type="evidence" value="ECO:0007669"/>
    <property type="project" value="InterPro"/>
</dbReference>
<dbReference type="CDD" id="cd00392">
    <property type="entry name" value="Ribosomal_L13"/>
    <property type="match status" value="1"/>
</dbReference>
<dbReference type="FunFam" id="3.90.1180.10:FF:000002">
    <property type="entry name" value="60S ribosomal protein L16"/>
    <property type="match status" value="1"/>
</dbReference>
<dbReference type="Gene3D" id="1.20.5.4280">
    <property type="match status" value="1"/>
</dbReference>
<dbReference type="Gene3D" id="3.90.1180.10">
    <property type="entry name" value="Ribosomal protein L13"/>
    <property type="match status" value="1"/>
</dbReference>
<dbReference type="HAMAP" id="MF_01366">
    <property type="entry name" value="Ribosomal_uL13"/>
    <property type="match status" value="1"/>
</dbReference>
<dbReference type="InterPro" id="IPR005822">
    <property type="entry name" value="Ribosomal_uL13"/>
</dbReference>
<dbReference type="InterPro" id="IPR023563">
    <property type="entry name" value="Ribosomal_uL13_CS"/>
</dbReference>
<dbReference type="InterPro" id="IPR005755">
    <property type="entry name" value="Ribosomal_uL13_euk/arc"/>
</dbReference>
<dbReference type="InterPro" id="IPR036899">
    <property type="entry name" value="Ribosomal_uL13_sf"/>
</dbReference>
<dbReference type="NCBIfam" id="TIGR01077">
    <property type="entry name" value="L13_A_E"/>
    <property type="match status" value="1"/>
</dbReference>
<dbReference type="PANTHER" id="PTHR11545:SF3">
    <property type="entry name" value="LARGE RIBOSOMAL SUBUNIT PROTEIN UL13"/>
    <property type="match status" value="1"/>
</dbReference>
<dbReference type="PANTHER" id="PTHR11545">
    <property type="entry name" value="RIBOSOMAL PROTEIN L13"/>
    <property type="match status" value="1"/>
</dbReference>
<dbReference type="Pfam" id="PF00572">
    <property type="entry name" value="Ribosomal_L13"/>
    <property type="match status" value="1"/>
</dbReference>
<dbReference type="SUPFAM" id="SSF52161">
    <property type="entry name" value="Ribosomal protein L13"/>
    <property type="match status" value="1"/>
</dbReference>
<dbReference type="PROSITE" id="PS00783">
    <property type="entry name" value="RIBOSOMAL_L13"/>
    <property type="match status" value="1"/>
</dbReference>
<evidence type="ECO:0000305" key="1"/>
<organism>
    <name type="scientific">Tetrahymena thermophila (strain SB210)</name>
    <dbReference type="NCBI Taxonomy" id="312017"/>
    <lineage>
        <taxon>Eukaryota</taxon>
        <taxon>Sar</taxon>
        <taxon>Alveolata</taxon>
        <taxon>Ciliophora</taxon>
        <taxon>Intramacronucleata</taxon>
        <taxon>Oligohymenophorea</taxon>
        <taxon>Hymenostomatida</taxon>
        <taxon>Tetrahymenina</taxon>
        <taxon>Tetrahymenidae</taxon>
        <taxon>Tetrahymena</taxon>
    </lineage>
</organism>
<name>RL13A_TETTS</name>
<sequence>MFDKLVVIDAKGHLLGRLASYVAKELLSGQRIVVVRTEAINISGSLFRNRVKFSEFLNKWMNHNPRRGVQHFRAPSRIFWRAVRGMLPHKTPKGAAALERLKIFEGIPTPYDRVKKQVVVDALKVQRLRNSRPVCKLGDLSASVGWGKQTLIEKLEEKRRARAKTYHDKKVKQADARKKELAAPALKAIKDKLAQFGY</sequence>
<feature type="chain" id="PRO_0000413500" description="Large ribosomal subunit protein uL13">
    <location>
        <begin position="1"/>
        <end position="198"/>
    </location>
</feature>
<reference key="1">
    <citation type="journal article" date="2006" name="PLoS Biol.">
        <title>Macronuclear genome sequence of the ciliate Tetrahymena thermophila, a model eukaryote.</title>
        <authorList>
            <person name="Eisen J.A."/>
            <person name="Coyne R.S."/>
            <person name="Wu M."/>
            <person name="Wu D."/>
            <person name="Thiagarajan M."/>
            <person name="Wortman J.R."/>
            <person name="Badger J.H."/>
            <person name="Ren Q."/>
            <person name="Amedeo P."/>
            <person name="Jones K.M."/>
            <person name="Tallon L.J."/>
            <person name="Delcher A.L."/>
            <person name="Salzberg S.L."/>
            <person name="Silva J.C."/>
            <person name="Haas B.J."/>
            <person name="Majoros W.H."/>
            <person name="Farzad M."/>
            <person name="Carlton J.M."/>
            <person name="Smith R.K. Jr."/>
            <person name="Garg J."/>
            <person name="Pearlman R.E."/>
            <person name="Karrer K.M."/>
            <person name="Sun L."/>
            <person name="Manning G."/>
            <person name="Elde N.C."/>
            <person name="Turkewitz A.P."/>
            <person name="Asai D.J."/>
            <person name="Wilkes D.E."/>
            <person name="Wang Y."/>
            <person name="Cai H."/>
            <person name="Collins K."/>
            <person name="Stewart B.A."/>
            <person name="Lee S.R."/>
            <person name="Wilamowska K."/>
            <person name="Weinberg Z."/>
            <person name="Ruzzo W.L."/>
            <person name="Wloga D."/>
            <person name="Gaertig J."/>
            <person name="Frankel J."/>
            <person name="Tsao C.-C."/>
            <person name="Gorovsky M.A."/>
            <person name="Keeling P.J."/>
            <person name="Waller R.F."/>
            <person name="Patron N.J."/>
            <person name="Cherry J.M."/>
            <person name="Stover N.A."/>
            <person name="Krieger C.J."/>
            <person name="del Toro C."/>
            <person name="Ryder H.F."/>
            <person name="Williamson S.C."/>
            <person name="Barbeau R.A."/>
            <person name="Hamilton E.P."/>
            <person name="Orias E."/>
        </authorList>
    </citation>
    <scope>NUCLEOTIDE SEQUENCE [LARGE SCALE GENOMIC DNA]</scope>
    <source>
        <strain>SB210</strain>
    </source>
</reference>
<reference key="2">
    <citation type="submission" date="2006-03" db="EMBL/GenBank/DDBJ databases">
        <title>Tetrahymena thermophila EST sequencing.</title>
        <authorList>
            <person name="Coyne R."/>
            <person name="Pearlman R."/>
            <person name="Garg J."/>
            <person name="Eisen J.A."/>
        </authorList>
    </citation>
    <scope>NUCLEOTIDE SEQUENCE [LARGE SCALE MRNA]</scope>
    <source>
        <strain>SB210</strain>
    </source>
</reference>
<reference key="3">
    <citation type="journal article" date="2011" name="Science">
        <title>Crystal structure of the eukaryotic 60S ribosomal subunit in complex with initiation factor 6.</title>
        <authorList>
            <person name="Klinge S."/>
            <person name="Voigts-Hoffmann F."/>
            <person name="Leibundgut M."/>
            <person name="Arpagaus S."/>
            <person name="Ban N."/>
        </authorList>
    </citation>
    <scope>X-RAY CRYSTALLOGRAPHY (3.52 ANGSTROMS) OF 60S RIBOSOME</scope>
</reference>
<proteinExistence type="evidence at protein level"/>
<gene>
    <name type="primary">RPL13A</name>
    <name type="synonym">RPL16</name>
</gene>
<accession>P0DJ15</accession>